<comment type="function">
    <text evidence="1">One of the primary rRNA binding proteins, it binds directly to 16S rRNA where it helps nucleate assembly of the platform of the 30S subunit by binding and bridging several RNA helices of the 16S rRNA.</text>
</comment>
<comment type="function">
    <text evidence="1">Forms an intersubunit bridge (bridge B4) with the 23S rRNA of the 50S subunit in the ribosome.</text>
</comment>
<comment type="subunit">
    <text evidence="1">Part of the 30S ribosomal subunit. Forms a bridge to the 50S subunit in the 70S ribosome, contacting the 23S rRNA.</text>
</comment>
<comment type="similarity">
    <text evidence="1">Belongs to the universal ribosomal protein uS15 family.</text>
</comment>
<reference key="1">
    <citation type="journal article" date="1998" name="Science">
        <title>Complete genome sequence of Treponema pallidum, the syphilis spirochete.</title>
        <authorList>
            <person name="Fraser C.M."/>
            <person name="Norris S.J."/>
            <person name="Weinstock G.M."/>
            <person name="White O."/>
            <person name="Sutton G.G."/>
            <person name="Dodson R.J."/>
            <person name="Gwinn M.L."/>
            <person name="Hickey E.K."/>
            <person name="Clayton R.A."/>
            <person name="Ketchum K.A."/>
            <person name="Sodergren E."/>
            <person name="Hardham J.M."/>
            <person name="McLeod M.P."/>
            <person name="Salzberg S.L."/>
            <person name="Peterson J.D."/>
            <person name="Khalak H.G."/>
            <person name="Richardson D.L."/>
            <person name="Howell J.K."/>
            <person name="Chidambaram M."/>
            <person name="Utterback T.R."/>
            <person name="McDonald L.A."/>
            <person name="Artiach P."/>
            <person name="Bowman C."/>
            <person name="Cotton M.D."/>
            <person name="Fujii C."/>
            <person name="Garland S.A."/>
            <person name="Hatch B."/>
            <person name="Horst K."/>
            <person name="Roberts K.M."/>
            <person name="Sandusky M."/>
            <person name="Weidman J.F."/>
            <person name="Smith H.O."/>
            <person name="Venter J.C."/>
        </authorList>
    </citation>
    <scope>NUCLEOTIDE SEQUENCE [LARGE SCALE GENOMIC DNA]</scope>
    <source>
        <strain>Nichols</strain>
    </source>
</reference>
<organism>
    <name type="scientific">Treponema pallidum (strain Nichols)</name>
    <dbReference type="NCBI Taxonomy" id="243276"/>
    <lineage>
        <taxon>Bacteria</taxon>
        <taxon>Pseudomonadati</taxon>
        <taxon>Spirochaetota</taxon>
        <taxon>Spirochaetia</taxon>
        <taxon>Spirochaetales</taxon>
        <taxon>Treponemataceae</taxon>
        <taxon>Treponema</taxon>
    </lineage>
</organism>
<protein>
    <recommendedName>
        <fullName evidence="1">Small ribosomal subunit protein uS15</fullName>
    </recommendedName>
    <alternativeName>
        <fullName evidence="3">30S ribosomal protein S15</fullName>
    </alternativeName>
</protein>
<accession>O83857</accession>
<evidence type="ECO:0000255" key="1">
    <source>
        <dbReference type="HAMAP-Rule" id="MF_01343"/>
    </source>
</evidence>
<evidence type="ECO:0000256" key="2">
    <source>
        <dbReference type="SAM" id="MobiDB-lite"/>
    </source>
</evidence>
<evidence type="ECO:0000305" key="3"/>
<feature type="chain" id="PRO_0000115577" description="Small ribosomal subunit protein uS15">
    <location>
        <begin position="1"/>
        <end position="89"/>
    </location>
</feature>
<feature type="region of interest" description="Disordered" evidence="2">
    <location>
        <begin position="1"/>
        <end position="23"/>
    </location>
</feature>
<gene>
    <name evidence="1" type="primary">rpsO</name>
    <name type="ordered locus">TP_0887</name>
</gene>
<sequence>MALTKERTASVVQQYGSGEKDTGSSSVQIALLTERIRQLTDHCKVHPKDKSSNRGLLVLVGRRRRLLRYSRRVSMGAYRSLVKSLGLRK</sequence>
<name>RS15_TREPA</name>
<proteinExistence type="inferred from homology"/>
<dbReference type="EMBL" id="AE000520">
    <property type="protein sequence ID" value="AAC26577.1"/>
    <property type="molecule type" value="Genomic_DNA"/>
</dbReference>
<dbReference type="PIR" id="D71269">
    <property type="entry name" value="D71269"/>
</dbReference>
<dbReference type="RefSeq" id="WP_010882330.1">
    <property type="nucleotide sequence ID" value="NC_021490.2"/>
</dbReference>
<dbReference type="SMR" id="O83857"/>
<dbReference type="STRING" id="243276.TP_0887"/>
<dbReference type="EnsemblBacteria" id="AAC26577">
    <property type="protein sequence ID" value="AAC26577"/>
    <property type="gene ID" value="TP_0887"/>
</dbReference>
<dbReference type="GeneID" id="93876641"/>
<dbReference type="KEGG" id="tpa:TP_0887"/>
<dbReference type="KEGG" id="tpw:TPANIC_0887"/>
<dbReference type="eggNOG" id="COG0184">
    <property type="taxonomic scope" value="Bacteria"/>
</dbReference>
<dbReference type="HOGENOM" id="CLU_148518_0_0_12"/>
<dbReference type="OrthoDB" id="9799262at2"/>
<dbReference type="Proteomes" id="UP000000811">
    <property type="component" value="Chromosome"/>
</dbReference>
<dbReference type="GO" id="GO:0022627">
    <property type="term" value="C:cytosolic small ribosomal subunit"/>
    <property type="evidence" value="ECO:0007669"/>
    <property type="project" value="TreeGrafter"/>
</dbReference>
<dbReference type="GO" id="GO:0019843">
    <property type="term" value="F:rRNA binding"/>
    <property type="evidence" value="ECO:0007669"/>
    <property type="project" value="UniProtKB-UniRule"/>
</dbReference>
<dbReference type="GO" id="GO:0003735">
    <property type="term" value="F:structural constituent of ribosome"/>
    <property type="evidence" value="ECO:0007669"/>
    <property type="project" value="InterPro"/>
</dbReference>
<dbReference type="GO" id="GO:0006412">
    <property type="term" value="P:translation"/>
    <property type="evidence" value="ECO:0007669"/>
    <property type="project" value="UniProtKB-UniRule"/>
</dbReference>
<dbReference type="CDD" id="cd00353">
    <property type="entry name" value="Ribosomal_S15p_S13e"/>
    <property type="match status" value="1"/>
</dbReference>
<dbReference type="FunFam" id="1.10.287.10:FF:000002">
    <property type="entry name" value="30S ribosomal protein S15"/>
    <property type="match status" value="1"/>
</dbReference>
<dbReference type="Gene3D" id="6.10.250.3130">
    <property type="match status" value="1"/>
</dbReference>
<dbReference type="Gene3D" id="1.10.287.10">
    <property type="entry name" value="S15/NS1, RNA-binding"/>
    <property type="match status" value="1"/>
</dbReference>
<dbReference type="HAMAP" id="MF_01343_B">
    <property type="entry name" value="Ribosomal_uS15_B"/>
    <property type="match status" value="1"/>
</dbReference>
<dbReference type="InterPro" id="IPR000589">
    <property type="entry name" value="Ribosomal_uS15"/>
</dbReference>
<dbReference type="InterPro" id="IPR005290">
    <property type="entry name" value="Ribosomal_uS15_bac-type"/>
</dbReference>
<dbReference type="InterPro" id="IPR009068">
    <property type="entry name" value="uS15_NS1_RNA-bd_sf"/>
</dbReference>
<dbReference type="NCBIfam" id="TIGR00952">
    <property type="entry name" value="S15_bact"/>
    <property type="match status" value="1"/>
</dbReference>
<dbReference type="PANTHER" id="PTHR23321">
    <property type="entry name" value="RIBOSOMAL PROTEIN S15, BACTERIAL AND ORGANELLAR"/>
    <property type="match status" value="1"/>
</dbReference>
<dbReference type="PANTHER" id="PTHR23321:SF26">
    <property type="entry name" value="SMALL RIBOSOMAL SUBUNIT PROTEIN US15M"/>
    <property type="match status" value="1"/>
</dbReference>
<dbReference type="Pfam" id="PF00312">
    <property type="entry name" value="Ribosomal_S15"/>
    <property type="match status" value="1"/>
</dbReference>
<dbReference type="SMART" id="SM01387">
    <property type="entry name" value="Ribosomal_S15"/>
    <property type="match status" value="1"/>
</dbReference>
<dbReference type="SUPFAM" id="SSF47060">
    <property type="entry name" value="S15/NS1 RNA-binding domain"/>
    <property type="match status" value="1"/>
</dbReference>
<keyword id="KW-1185">Reference proteome</keyword>
<keyword id="KW-0687">Ribonucleoprotein</keyword>
<keyword id="KW-0689">Ribosomal protein</keyword>
<keyword id="KW-0694">RNA-binding</keyword>
<keyword id="KW-0699">rRNA-binding</keyword>